<comment type="subcellular location">
    <subcellularLocation>
        <location evidence="1">Secreted</location>
    </subcellularLocation>
</comment>
<comment type="tissue specificity">
    <text evidence="5">Expressed by the venom gland.</text>
</comment>
<comment type="mass spectrometry"/>
<comment type="similarity">
    <text evidence="4">Belongs to the cationic peptide 04 (cupiennin) family. 09 subfamily.</text>
</comment>
<proteinExistence type="evidence at protein level"/>
<reference key="1">
    <citation type="journal article" date="2012" name="FEBS J.">
        <title>Multicomponent venom of the spider Cupiennius salei: a bioanalytical investigation applying different strategies.</title>
        <authorList>
            <person name="Trachsel C."/>
            <person name="Siegemund D."/>
            <person name="Kampfer U."/>
            <person name="Kopp L.S."/>
            <person name="Buhr C."/>
            <person name="Grossmann J."/>
            <person name="Luthi C."/>
            <person name="Cunningham M."/>
            <person name="Nentwig W."/>
            <person name="Kuhn-Nentwig L."/>
            <person name="Schurch S."/>
            <person name="Schaller J."/>
        </authorList>
    </citation>
    <scope>PROTEIN SEQUENCE</scope>
    <scope>MASS SPECTROMETRY</scope>
    <scope>AMIDATION AT SER-21</scope>
    <source>
        <tissue>Venom</tissue>
    </source>
</reference>
<reference key="2">
    <citation type="unpublished observations" date="2015-06">
        <authorList>
            <person name="Kuhn-Nentwig L."/>
            <person name="Gohel T."/>
        </authorList>
    </citation>
    <scope>NOMENCLATURE</scope>
</reference>
<sequence>FVNTIRLLINKAREWNNKQSS</sequence>
<dbReference type="GO" id="GO:0005576">
    <property type="term" value="C:extracellular region"/>
    <property type="evidence" value="ECO:0007669"/>
    <property type="project" value="UniProtKB-SubCell"/>
</dbReference>
<dbReference type="GO" id="GO:0090729">
    <property type="term" value="F:toxin activity"/>
    <property type="evidence" value="ECO:0007669"/>
    <property type="project" value="UniProtKB-KW"/>
</dbReference>
<evidence type="ECO:0000269" key="1">
    <source>
    </source>
</evidence>
<evidence type="ECO:0000303" key="2">
    <source>
    </source>
</evidence>
<evidence type="ECO:0000303" key="3">
    <source ref="2"/>
</evidence>
<evidence type="ECO:0000305" key="4"/>
<evidence type="ECO:0000305" key="5">
    <source>
    </source>
</evidence>
<organism>
    <name type="scientific">Cupiennius salei</name>
    <name type="common">American wandering spider</name>
    <dbReference type="NCBI Taxonomy" id="6928"/>
    <lineage>
        <taxon>Eukaryota</taxon>
        <taxon>Metazoa</taxon>
        <taxon>Ecdysozoa</taxon>
        <taxon>Arthropoda</taxon>
        <taxon>Chelicerata</taxon>
        <taxon>Arachnida</taxon>
        <taxon>Araneae</taxon>
        <taxon>Araneomorphae</taxon>
        <taxon>Entelegynae</taxon>
        <taxon>Lycosoidea</taxon>
        <taxon>Ctenidae</taxon>
        <taxon>Cupiennius</taxon>
    </lineage>
</organism>
<feature type="peptide" id="PRO_0000421224" description="Cupiennin-6a" evidence="1">
    <location>
        <begin position="1"/>
        <end position="21"/>
    </location>
</feature>
<feature type="modified residue" description="Serine amide" evidence="1">
    <location>
        <position position="21"/>
    </location>
</feature>
<name>TXC6A_CUPSA</name>
<keyword id="KW-0027">Amidation</keyword>
<keyword id="KW-0903">Direct protein sequencing</keyword>
<keyword id="KW-0964">Secreted</keyword>
<keyword id="KW-0800">Toxin</keyword>
<accession>B3EWW5</accession>
<protein>
    <recommendedName>
        <fullName evidence="3">Cupiennin-6a</fullName>
        <shortName evidence="3">Cu-6a</shortName>
    </recommendedName>
    <alternativeName>
        <fullName evidence="2">Short cationic peptide-6a</fullName>
        <shortName evidence="2">SCP-6a</shortName>
    </alternativeName>
</protein>